<comment type="function">
    <text evidence="1">Component of the ERMES/MDM complex, which serves as a molecular tether to connect the endoplasmic reticulum (ER) and mitochondria. Components of this complex are involved in the control of mitochondrial shape and protein biogenesis, and function in nonvesicular lipid trafficking between the ER and mitochondria. MDM12 is required for the interaction of the ER-resident membrane protein MMM1 and the outer mitochondrial membrane-resident beta-barrel protein MDM10. The MDM12-MMM1 subcomplex functions in the major beta-barrel assembly pathway that is responsible for biogenesis of all mitochondrial outer membrane beta-barrel proteins, and acts in a late step after the SAM complex. The MDM10-MDM12-MMM1 subcomplex further acts in the TOM40-specific pathway after the action of the MDM12-MMM1 complex. Essential for establishing and maintaining the structure of mitochondria and maintenance of mtDNA nucleoids.</text>
</comment>
<comment type="subunit">
    <text evidence="1">Component of the ER-mitochondria encounter structure (ERMES) or MDM complex, composed of MMM1, MDM10, MDM12 and MDM34. A MMM1 homodimer associates with one molecule of MDM12 on each side in a pairwise head-to-tail manner, and the SMP-LTD domains of MMM1 and MDM12 generate a continuous hydrophobic tunnel for phospholipid trafficking.</text>
</comment>
<comment type="subcellular location">
    <subcellularLocation>
        <location evidence="1">Mitochondrion outer membrane</location>
        <topology evidence="1">Peripheral membrane protein</topology>
        <orientation evidence="1">Cytoplasmic side</orientation>
    </subcellularLocation>
    <subcellularLocation>
        <location evidence="1">Endoplasmic reticulum membrane</location>
        <topology evidence="1">Peripheral membrane protein</topology>
        <orientation evidence="1">Cytoplasmic side</orientation>
    </subcellularLocation>
    <text evidence="1">The ERMES/MDM complex localizes to a few discrete foci (around 10 per single cell), that represent mitochondria-endoplasmic reticulum junctions. These foci are often found next to mtDNA nucleoids.</text>
</comment>
<comment type="domain">
    <text evidence="1">The SMP-LTD domain is a barrel-like domain that can bind various types of glycerophospholipids in its interior and mediate their transfer between two adjacent bilayers.</text>
</comment>
<comment type="similarity">
    <text evidence="1">Belongs to the MDM12 family.</text>
</comment>
<feature type="chain" id="PRO_0000384315" description="Mitochondrial distribution and morphology protein 12">
    <location>
        <begin position="1"/>
        <end position="439"/>
    </location>
</feature>
<feature type="domain" description="SMP-LTD" evidence="1">
    <location>
        <begin position="1"/>
        <end position="439"/>
    </location>
</feature>
<feature type="region of interest" description="Disordered" evidence="2">
    <location>
        <begin position="71"/>
        <end position="104"/>
    </location>
</feature>
<feature type="region of interest" description="Disordered" evidence="2">
    <location>
        <begin position="182"/>
        <end position="278"/>
    </location>
</feature>
<feature type="region of interest" description="Disordered" evidence="2">
    <location>
        <begin position="362"/>
        <end position="385"/>
    </location>
</feature>
<feature type="compositionally biased region" description="Acidic residues" evidence="2">
    <location>
        <begin position="71"/>
        <end position="84"/>
    </location>
</feature>
<feature type="compositionally biased region" description="Basic and acidic residues" evidence="2">
    <location>
        <begin position="212"/>
        <end position="229"/>
    </location>
</feature>
<feature type="compositionally biased region" description="Polar residues" evidence="2">
    <location>
        <begin position="230"/>
        <end position="255"/>
    </location>
</feature>
<feature type="compositionally biased region" description="Basic and acidic residues" evidence="2">
    <location>
        <begin position="256"/>
        <end position="269"/>
    </location>
</feature>
<evidence type="ECO:0000255" key="1">
    <source>
        <dbReference type="HAMAP-Rule" id="MF_03104"/>
    </source>
</evidence>
<evidence type="ECO:0000256" key="2">
    <source>
        <dbReference type="SAM" id="MobiDB-lite"/>
    </source>
</evidence>
<reference key="1">
    <citation type="journal article" date="2009" name="Genome Res.">
        <title>Comparative genomic analyses of the human fungal pathogens Coccidioides and their relatives.</title>
        <authorList>
            <person name="Sharpton T.J."/>
            <person name="Stajich J.E."/>
            <person name="Rounsley S.D."/>
            <person name="Gardner M.J."/>
            <person name="Wortman J.R."/>
            <person name="Jordar V.S."/>
            <person name="Maiti R."/>
            <person name="Kodira C.D."/>
            <person name="Neafsey D.E."/>
            <person name="Zeng Q."/>
            <person name="Hung C.-Y."/>
            <person name="McMahan C."/>
            <person name="Muszewska A."/>
            <person name="Grynberg M."/>
            <person name="Mandel M.A."/>
            <person name="Kellner E.M."/>
            <person name="Barker B.M."/>
            <person name="Galgiani J.N."/>
            <person name="Orbach M.J."/>
            <person name="Kirkland T.N."/>
            <person name="Cole G.T."/>
            <person name="Henn M.R."/>
            <person name="Birren B.W."/>
            <person name="Taylor J.W."/>
        </authorList>
    </citation>
    <scope>NUCLEOTIDE SEQUENCE [LARGE SCALE GENOMIC DNA]</scope>
    <source>
        <strain>UAMH 1704</strain>
    </source>
</reference>
<gene>
    <name evidence="1" type="primary">MDM12</name>
    <name type="ORF">UREG_07110</name>
</gene>
<organism>
    <name type="scientific">Uncinocarpus reesii (strain UAMH 1704)</name>
    <dbReference type="NCBI Taxonomy" id="336963"/>
    <lineage>
        <taxon>Eukaryota</taxon>
        <taxon>Fungi</taxon>
        <taxon>Dikarya</taxon>
        <taxon>Ascomycota</taxon>
        <taxon>Pezizomycotina</taxon>
        <taxon>Eurotiomycetes</taxon>
        <taxon>Eurotiomycetidae</taxon>
        <taxon>Onygenales</taxon>
        <taxon>Onygenaceae</taxon>
        <taxon>Uncinocarpus</taxon>
    </lineage>
</organism>
<dbReference type="EMBL" id="CH476619">
    <property type="protein sequence ID" value="EEP82245.1"/>
    <property type="molecule type" value="Genomic_DNA"/>
</dbReference>
<dbReference type="RefSeq" id="XP_002582337.1">
    <property type="nucleotide sequence ID" value="XM_002582291.1"/>
</dbReference>
<dbReference type="SMR" id="C4JY59"/>
<dbReference type="FunCoup" id="C4JY59">
    <property type="interactions" value="42"/>
</dbReference>
<dbReference type="STRING" id="336963.C4JY59"/>
<dbReference type="GeneID" id="8444554"/>
<dbReference type="KEGG" id="ure:UREG_07110"/>
<dbReference type="VEuPathDB" id="FungiDB:UREG_07110"/>
<dbReference type="eggNOG" id="ENOG502S1MJ">
    <property type="taxonomic scope" value="Eukaryota"/>
</dbReference>
<dbReference type="HOGENOM" id="CLU_026794_0_0_1"/>
<dbReference type="InParanoid" id="C4JY59"/>
<dbReference type="OMA" id="KRAHFCF"/>
<dbReference type="OrthoDB" id="3356905at2759"/>
<dbReference type="Proteomes" id="UP000002058">
    <property type="component" value="Unassembled WGS sequence"/>
</dbReference>
<dbReference type="GO" id="GO:0005789">
    <property type="term" value="C:endoplasmic reticulum membrane"/>
    <property type="evidence" value="ECO:0007669"/>
    <property type="project" value="UniProtKB-SubCell"/>
</dbReference>
<dbReference type="GO" id="GO:0032865">
    <property type="term" value="C:ERMES complex"/>
    <property type="evidence" value="ECO:0007669"/>
    <property type="project" value="UniProtKB-UniRule"/>
</dbReference>
<dbReference type="GO" id="GO:0008289">
    <property type="term" value="F:lipid binding"/>
    <property type="evidence" value="ECO:0007669"/>
    <property type="project" value="UniProtKB-KW"/>
</dbReference>
<dbReference type="GO" id="GO:0000002">
    <property type="term" value="P:mitochondrial genome maintenance"/>
    <property type="evidence" value="ECO:0007669"/>
    <property type="project" value="UniProtKB-UniRule"/>
</dbReference>
<dbReference type="GO" id="GO:1990456">
    <property type="term" value="P:mitochondrion-endoplasmic reticulum membrane tethering"/>
    <property type="evidence" value="ECO:0007669"/>
    <property type="project" value="TreeGrafter"/>
</dbReference>
<dbReference type="GO" id="GO:0015914">
    <property type="term" value="P:phospholipid transport"/>
    <property type="evidence" value="ECO:0007669"/>
    <property type="project" value="TreeGrafter"/>
</dbReference>
<dbReference type="GO" id="GO:0045040">
    <property type="term" value="P:protein insertion into mitochondrial outer membrane"/>
    <property type="evidence" value="ECO:0007669"/>
    <property type="project" value="UniProtKB-UniRule"/>
</dbReference>
<dbReference type="CDD" id="cd21672">
    <property type="entry name" value="SMP_Mdm12"/>
    <property type="match status" value="1"/>
</dbReference>
<dbReference type="HAMAP" id="MF_03104">
    <property type="entry name" value="Mdm12"/>
    <property type="match status" value="1"/>
</dbReference>
<dbReference type="InterPro" id="IPR027532">
    <property type="entry name" value="Mdm12"/>
</dbReference>
<dbReference type="InterPro" id="IPR019411">
    <property type="entry name" value="MMM1_dom"/>
</dbReference>
<dbReference type="InterPro" id="IPR031468">
    <property type="entry name" value="SMP_LBD"/>
</dbReference>
<dbReference type="PANTHER" id="PTHR28204">
    <property type="entry name" value="MITOCHONDRIAL DISTRIBUTION AND MORPHOLOGY PROTEIN 12"/>
    <property type="match status" value="1"/>
</dbReference>
<dbReference type="PANTHER" id="PTHR28204:SF1">
    <property type="entry name" value="MITOCHONDRIAL DISTRIBUTION AND MORPHOLOGY PROTEIN 12"/>
    <property type="match status" value="1"/>
</dbReference>
<dbReference type="Pfam" id="PF10296">
    <property type="entry name" value="MMM1"/>
    <property type="match status" value="1"/>
</dbReference>
<dbReference type="PROSITE" id="PS51847">
    <property type="entry name" value="SMP"/>
    <property type="match status" value="1"/>
</dbReference>
<proteinExistence type="inferred from homology"/>
<accession>C4JY59</accession>
<keyword id="KW-0256">Endoplasmic reticulum</keyword>
<keyword id="KW-0445">Lipid transport</keyword>
<keyword id="KW-0446">Lipid-binding</keyword>
<keyword id="KW-0472">Membrane</keyword>
<keyword id="KW-0496">Mitochondrion</keyword>
<keyword id="KW-1000">Mitochondrion outer membrane</keyword>
<keyword id="KW-1185">Reference proteome</keyword>
<keyword id="KW-0813">Transport</keyword>
<sequence length="439" mass="48444">MSIDINWEAATSGPDGEALAERIRSFIHDKFQQIALPRFIRSVEVNSFDFGTVRPQLQIKDLCDPFEDFYEEDEGDEDFSDDQDGAPKHPPTIATERSGAGTWQAEHPSFVAGRLPGGIESRDIPAPSKEDLLASRPMRSPMSFGESLNPYFFPRAGTPGIPGGTSNLGYYMPLGGMSGTQTPLASVPRGPFSPGLRDSSVYGDIHNPPARDYPRPVHRQTDTDIDSGHSRPSTADTLNSINSQRISNPALSHPHSSNESHPDTRDHSPPPRRMHEKKPDDLQVLCQLRYNGNIRLSLTAQVLLDYPMPSFVGLPLKLNITGLSFDGVAVVAYIRKRVHFCFLSPEDADTLLGSEESNETGYIPGINPIGGGASGGAASSRRRDDSLLRDVRVESEIGRKEDGKPVLKNVGKVEKFVLEQVRRIFEEEFVYPSFWTFLV</sequence>
<protein>
    <recommendedName>
        <fullName evidence="1">Mitochondrial distribution and morphology protein 12</fullName>
    </recommendedName>
    <alternativeName>
        <fullName evidence="1">Mitochondrial inheritance component MDM12</fullName>
    </alternativeName>
</protein>
<name>MDM12_UNCRE</name>